<accession>B4HLH4</accession>
<reference key="1">
    <citation type="journal article" date="2007" name="Nature">
        <title>Evolution of genes and genomes on the Drosophila phylogeny.</title>
        <authorList>
            <consortium name="Drosophila 12 genomes consortium"/>
        </authorList>
    </citation>
    <scope>NUCLEOTIDE SEQUENCE [LARGE SCALE GENOMIC DNA]</scope>
    <source>
        <strain>Rob3c / Tucson 14021-0248.25</strain>
    </source>
</reference>
<proteinExistence type="inferred from homology"/>
<evidence type="ECO:0000250" key="1"/>
<evidence type="ECO:0000255" key="2">
    <source>
        <dbReference type="PROSITE-ProRule" id="PRU00211"/>
    </source>
</evidence>
<evidence type="ECO:0000255" key="3">
    <source>
        <dbReference type="PROSITE-ProRule" id="PRU00541"/>
    </source>
</evidence>
<evidence type="ECO:0000255" key="4">
    <source>
        <dbReference type="PROSITE-ProRule" id="PRU00542"/>
    </source>
</evidence>
<evidence type="ECO:0000305" key="5"/>
<protein>
    <recommendedName>
        <fullName>Probable ATP-dependent RNA helicase spindle-E</fullName>
        <ecNumber>3.6.4.13</ecNumber>
    </recommendedName>
    <alternativeName>
        <fullName>Homeless</fullName>
    </alternativeName>
</protein>
<organism>
    <name type="scientific">Drosophila sechellia</name>
    <name type="common">Fruit fly</name>
    <dbReference type="NCBI Taxonomy" id="7238"/>
    <lineage>
        <taxon>Eukaryota</taxon>
        <taxon>Metazoa</taxon>
        <taxon>Ecdysozoa</taxon>
        <taxon>Arthropoda</taxon>
        <taxon>Hexapoda</taxon>
        <taxon>Insecta</taxon>
        <taxon>Pterygota</taxon>
        <taxon>Neoptera</taxon>
        <taxon>Endopterygota</taxon>
        <taxon>Diptera</taxon>
        <taxon>Brachycera</taxon>
        <taxon>Muscomorpha</taxon>
        <taxon>Ephydroidea</taxon>
        <taxon>Drosophilidae</taxon>
        <taxon>Drosophila</taxon>
        <taxon>Sophophora</taxon>
    </lineage>
</organism>
<dbReference type="EC" id="3.6.4.13"/>
<dbReference type="EMBL" id="CH480815">
    <property type="protein sequence ID" value="EDW41994.1"/>
    <property type="molecule type" value="Genomic_DNA"/>
</dbReference>
<dbReference type="SMR" id="B4HLH4"/>
<dbReference type="STRING" id="7238.B4HLH4"/>
<dbReference type="EnsemblMetazoa" id="FBtr0207250">
    <property type="protein sequence ID" value="FBpp0205742"/>
    <property type="gene ID" value="FBgn0179129"/>
</dbReference>
<dbReference type="EnsemblMetazoa" id="XM_002030972.2">
    <property type="protein sequence ID" value="XP_002031008.1"/>
    <property type="gene ID" value="LOC6606200"/>
</dbReference>
<dbReference type="GeneID" id="6606200"/>
<dbReference type="KEGG" id="dse:6606200"/>
<dbReference type="HOGENOM" id="CLU_002601_1_0_1"/>
<dbReference type="OMA" id="QRSAYCS"/>
<dbReference type="OrthoDB" id="16639at7215"/>
<dbReference type="PhylomeDB" id="B4HLH4"/>
<dbReference type="Proteomes" id="UP000001292">
    <property type="component" value="Unassembled WGS sequence"/>
</dbReference>
<dbReference type="GO" id="GO:0005634">
    <property type="term" value="C:nucleus"/>
    <property type="evidence" value="ECO:0007669"/>
    <property type="project" value="EnsemblMetazoa"/>
</dbReference>
<dbReference type="GO" id="GO:0043186">
    <property type="term" value="C:P granule"/>
    <property type="evidence" value="ECO:0007669"/>
    <property type="project" value="EnsemblMetazoa"/>
</dbReference>
<dbReference type="GO" id="GO:0005524">
    <property type="term" value="F:ATP binding"/>
    <property type="evidence" value="ECO:0007669"/>
    <property type="project" value="UniProtKB-KW"/>
</dbReference>
<dbReference type="GO" id="GO:0016887">
    <property type="term" value="F:ATP hydrolysis activity"/>
    <property type="evidence" value="ECO:0007669"/>
    <property type="project" value="RHEA"/>
</dbReference>
<dbReference type="GO" id="GO:0003723">
    <property type="term" value="F:RNA binding"/>
    <property type="evidence" value="ECO:0007669"/>
    <property type="project" value="TreeGrafter"/>
</dbReference>
<dbReference type="GO" id="GO:0003724">
    <property type="term" value="F:RNA helicase activity"/>
    <property type="evidence" value="ECO:0007669"/>
    <property type="project" value="UniProtKB-EC"/>
</dbReference>
<dbReference type="GO" id="GO:0046843">
    <property type="term" value="P:dorsal appendage formation"/>
    <property type="evidence" value="ECO:0007669"/>
    <property type="project" value="EnsemblMetazoa"/>
</dbReference>
<dbReference type="GO" id="GO:0007294">
    <property type="term" value="P:germarium-derived oocyte fate determination"/>
    <property type="evidence" value="ECO:0007669"/>
    <property type="project" value="EnsemblMetazoa"/>
</dbReference>
<dbReference type="GO" id="GO:0098795">
    <property type="term" value="P:global gene silencing by mRNA cleavage"/>
    <property type="evidence" value="ECO:0007669"/>
    <property type="project" value="EnsemblMetazoa"/>
</dbReference>
<dbReference type="GO" id="GO:0031507">
    <property type="term" value="P:heterochromatin formation"/>
    <property type="evidence" value="ECO:0007669"/>
    <property type="project" value="EnsemblMetazoa"/>
</dbReference>
<dbReference type="GO" id="GO:0008298">
    <property type="term" value="P:intracellular mRNA localization"/>
    <property type="evidence" value="ECO:0007669"/>
    <property type="project" value="EnsemblMetazoa"/>
</dbReference>
<dbReference type="GO" id="GO:0007076">
    <property type="term" value="P:mitotic chromosome condensation"/>
    <property type="evidence" value="ECO:0007669"/>
    <property type="project" value="EnsemblMetazoa"/>
</dbReference>
<dbReference type="GO" id="GO:0030717">
    <property type="term" value="P:oocyte karyosome formation"/>
    <property type="evidence" value="ECO:0007669"/>
    <property type="project" value="EnsemblMetazoa"/>
</dbReference>
<dbReference type="GO" id="GO:0030720">
    <property type="term" value="P:oocyte localization involved in germarium-derived egg chamber formation"/>
    <property type="evidence" value="ECO:0007669"/>
    <property type="project" value="EnsemblMetazoa"/>
</dbReference>
<dbReference type="GO" id="GO:0001556">
    <property type="term" value="P:oocyte maturation"/>
    <property type="evidence" value="ECO:0007669"/>
    <property type="project" value="EnsemblMetazoa"/>
</dbReference>
<dbReference type="GO" id="GO:0009949">
    <property type="term" value="P:polarity specification of anterior/posterior axis"/>
    <property type="evidence" value="ECO:0007669"/>
    <property type="project" value="EnsemblMetazoa"/>
</dbReference>
<dbReference type="GO" id="GO:0009951">
    <property type="term" value="P:polarity specification of dorsal/ventral axis"/>
    <property type="evidence" value="ECO:0007669"/>
    <property type="project" value="EnsemblMetazoa"/>
</dbReference>
<dbReference type="GO" id="GO:0007317">
    <property type="term" value="P:regulation of pole plasm oskar mRNA localization"/>
    <property type="evidence" value="ECO:0007669"/>
    <property type="project" value="EnsemblMetazoa"/>
</dbReference>
<dbReference type="GO" id="GO:0140965">
    <property type="term" value="P:secondary piRNA processing"/>
    <property type="evidence" value="ECO:0007669"/>
    <property type="project" value="EnsemblMetazoa"/>
</dbReference>
<dbReference type="GO" id="GO:0007283">
    <property type="term" value="P:spermatogenesis"/>
    <property type="evidence" value="ECO:0007669"/>
    <property type="project" value="UniProtKB-KW"/>
</dbReference>
<dbReference type="GO" id="GO:0141009">
    <property type="term" value="P:transposable element silencing by piRNA-mediated mRNA destabilization"/>
    <property type="evidence" value="ECO:0007669"/>
    <property type="project" value="EnsemblMetazoa"/>
</dbReference>
<dbReference type="CDD" id="cd17988">
    <property type="entry name" value="DEXHc_TDRD9"/>
    <property type="match status" value="1"/>
</dbReference>
<dbReference type="CDD" id="cd18791">
    <property type="entry name" value="SF2_C_RHA"/>
    <property type="match status" value="1"/>
</dbReference>
<dbReference type="FunFam" id="3.40.50.300:FF:001676">
    <property type="entry name" value="DExH-box ATP-dependent RNA helicase DExH7 chloroplastic"/>
    <property type="match status" value="1"/>
</dbReference>
<dbReference type="FunFam" id="1.20.120.1080:FF:000052">
    <property type="entry name" value="Probable ATP-dependent RNA helicase spindle-E"/>
    <property type="match status" value="1"/>
</dbReference>
<dbReference type="Gene3D" id="1.20.120.1080">
    <property type="match status" value="1"/>
</dbReference>
<dbReference type="Gene3D" id="2.30.30.140">
    <property type="match status" value="1"/>
</dbReference>
<dbReference type="Gene3D" id="2.40.50.90">
    <property type="match status" value="1"/>
</dbReference>
<dbReference type="Gene3D" id="3.40.50.300">
    <property type="entry name" value="P-loop containing nucleotide triphosphate hydrolases"/>
    <property type="match status" value="2"/>
</dbReference>
<dbReference type="InterPro" id="IPR011545">
    <property type="entry name" value="DEAD/DEAH_box_helicase_dom"/>
</dbReference>
<dbReference type="InterPro" id="IPR007502">
    <property type="entry name" value="Helicase-assoc_dom"/>
</dbReference>
<dbReference type="InterPro" id="IPR014001">
    <property type="entry name" value="Helicase_ATP-bd"/>
</dbReference>
<dbReference type="InterPro" id="IPR001650">
    <property type="entry name" value="Helicase_C-like"/>
</dbReference>
<dbReference type="InterPro" id="IPR027417">
    <property type="entry name" value="P-loop_NTPase"/>
</dbReference>
<dbReference type="InterPro" id="IPR035437">
    <property type="entry name" value="SNase_OB-fold_sf"/>
</dbReference>
<dbReference type="InterPro" id="IPR002999">
    <property type="entry name" value="Tudor"/>
</dbReference>
<dbReference type="InterPro" id="IPR013087">
    <property type="entry name" value="Znf_C2H2_type"/>
</dbReference>
<dbReference type="PANTHER" id="PTHR18934">
    <property type="entry name" value="ATP-DEPENDENT RNA HELICASE"/>
    <property type="match status" value="1"/>
</dbReference>
<dbReference type="PANTHER" id="PTHR18934:SF113">
    <property type="entry name" value="ATP-DEPENDENT RNA HELICASE TDRD9"/>
    <property type="match status" value="1"/>
</dbReference>
<dbReference type="Pfam" id="PF00270">
    <property type="entry name" value="DEAD"/>
    <property type="match status" value="1"/>
</dbReference>
<dbReference type="Pfam" id="PF00271">
    <property type="entry name" value="Helicase_C"/>
    <property type="match status" value="1"/>
</dbReference>
<dbReference type="Pfam" id="PF00567">
    <property type="entry name" value="TUDOR"/>
    <property type="match status" value="1"/>
</dbReference>
<dbReference type="SMART" id="SM00487">
    <property type="entry name" value="DEXDc"/>
    <property type="match status" value="1"/>
</dbReference>
<dbReference type="SMART" id="SM00847">
    <property type="entry name" value="HA2"/>
    <property type="match status" value="1"/>
</dbReference>
<dbReference type="SMART" id="SM00490">
    <property type="entry name" value="HELICc"/>
    <property type="match status" value="1"/>
</dbReference>
<dbReference type="SMART" id="SM00333">
    <property type="entry name" value="TUDOR"/>
    <property type="match status" value="1"/>
</dbReference>
<dbReference type="SUPFAM" id="SSF52540">
    <property type="entry name" value="P-loop containing nucleoside triphosphate hydrolases"/>
    <property type="match status" value="1"/>
</dbReference>
<dbReference type="SUPFAM" id="SSF63748">
    <property type="entry name" value="Tudor/PWWP/MBT"/>
    <property type="match status" value="1"/>
</dbReference>
<dbReference type="PROSITE" id="PS51192">
    <property type="entry name" value="HELICASE_ATP_BIND_1"/>
    <property type="match status" value="1"/>
</dbReference>
<dbReference type="PROSITE" id="PS51194">
    <property type="entry name" value="HELICASE_CTER"/>
    <property type="match status" value="1"/>
</dbReference>
<dbReference type="PROSITE" id="PS50304">
    <property type="entry name" value="TUDOR"/>
    <property type="match status" value="1"/>
</dbReference>
<gene>
    <name type="primary">spn-E</name>
    <name type="synonym">hls</name>
    <name type="ORF">GM24265</name>
</gene>
<comment type="function">
    <text evidence="1">Probable ATP-binding RNA helicase which plays a central role during spermatogenesis and oogenesis by repressing transposable elements and preventing their mobilization, which is essential for the germline integrity. Acts via the piRNA metabolic process, which mediates the repression of transposable elements during meiosis by forming complexes composed of piRNAs and Piwi and govern the methylation and subsequent repression of transposons. Involved in the repression of LTR retrotransposon copia. Also involved in telomere regulation by repressing specialized telomeric retroelements HeT-A, TAHRE, and TART; Drosophila telomeres being maintained by transposition of specialized telomeric retroelements. Involved in telomeric trans-silencing, a repression mechanism by which a transposon or a transgene inserted in subtelomeric heterochromatin has the capacity to repress in trans in the female germline, a homologous transposon, or transgene located in euchromatin. Involved in the repression of testis-expressed Stellate genes by the homologous Su(Ste) repeats. Required for anteroposterior and dorsoventral axis formation during oogenesis (By similarity).</text>
</comment>
<comment type="catalytic activity">
    <reaction>
        <text>ATP + H2O = ADP + phosphate + H(+)</text>
        <dbReference type="Rhea" id="RHEA:13065"/>
        <dbReference type="ChEBI" id="CHEBI:15377"/>
        <dbReference type="ChEBI" id="CHEBI:15378"/>
        <dbReference type="ChEBI" id="CHEBI:30616"/>
        <dbReference type="ChEBI" id="CHEBI:43474"/>
        <dbReference type="ChEBI" id="CHEBI:456216"/>
        <dbReference type="EC" id="3.6.4.13"/>
    </reaction>
</comment>
<comment type="subcellular location">
    <subcellularLocation>
        <location evidence="1">Cytoplasm</location>
    </subcellularLocation>
    <text evidence="1">Component of the nuage, also named P granule, a germ-cell-specific organelle required to repress transposon during meiosis.</text>
</comment>
<comment type="similarity">
    <text evidence="5">Belongs to the DEAD box helicase family. DEAH subfamily.</text>
</comment>
<name>SPNE_DROSE</name>
<feature type="chain" id="PRO_0000391920" description="Probable ATP-dependent RNA helicase spindle-E">
    <location>
        <begin position="1"/>
        <end position="1434"/>
    </location>
</feature>
<feature type="domain" description="Helicase ATP-binding" evidence="3">
    <location>
        <begin position="125"/>
        <end position="292"/>
    </location>
</feature>
<feature type="domain" description="Helicase C-terminal" evidence="4">
    <location>
        <begin position="339"/>
        <end position="526"/>
    </location>
</feature>
<feature type="domain" description="Tudor" evidence="2">
    <location>
        <begin position="938"/>
        <end position="1001"/>
    </location>
</feature>
<feature type="short sequence motif" description="DEAH box">
    <location>
        <begin position="238"/>
        <end position="241"/>
    </location>
</feature>
<feature type="binding site" evidence="3">
    <location>
        <begin position="138"/>
        <end position="145"/>
    </location>
    <ligand>
        <name>ATP</name>
        <dbReference type="ChEBI" id="CHEBI:30616"/>
    </ligand>
</feature>
<keyword id="KW-0067">ATP-binding</keyword>
<keyword id="KW-0963">Cytoplasm</keyword>
<keyword id="KW-0217">Developmental protein</keyword>
<keyword id="KW-0221">Differentiation</keyword>
<keyword id="KW-0347">Helicase</keyword>
<keyword id="KW-0378">Hydrolase</keyword>
<keyword id="KW-0469">Meiosis</keyword>
<keyword id="KW-0547">Nucleotide-binding</keyword>
<keyword id="KW-0896">Oogenesis</keyword>
<keyword id="KW-1185">Reference proteome</keyword>
<keyword id="KW-0943">RNA-mediated gene silencing</keyword>
<keyword id="KW-0744">Spermatogenesis</keyword>
<sequence>MDQEVMDFFDFSKELNRVPGAPQGYISSDPWLMATESKSSEVPNRETIGTDYVTKIVAKEKCRLNRTLLEYQPQGKRNRTLDDLDTDDEAEETEIRRDDEYYKKFRFNLNRDKNLSIYAKREEILAAINAHPVIIIKGETGCGKTTQVPQYILDEAYKSGKYCNIVVTQPRRIAAISIANRVCQEREWQQNTVCSFQVGLHRPNSLEDTRLLYCTTGVLLNNLINNKTLTHYTHIVLDEVHERDQNMDFLLIVVRRLLATNSRHVKIILMSATIDAKELSDYFATTNSIPPVITTNHGRKHSIEKFYRDQLGSIIWNEEDVGDQHVPEINKHGYRAAVKIIVIIDNMERKAAIQSRLSYDETLRYGAVLIFLPGIYEIDTMAENITCMLENDRNIKVLIVRCFSLMTPENQRDVFNPPPPGFRKIILATNIAESSITVPDVSYVIDFCLTKVKVTDTASSFSSLRLTWASKANCRQRAGRVGRLRSGRVYRMVNKHFYQREMAEFGIPEMLRLPLQNSVLKAKVLNMGSPMEILALALSPPNLSDIQNTILLLKEVGALYLTVDGVYDALDGDLTYWGTIMARLPLDTRQSRLIILGYIFNMLEEAIIIAAGLSTNGLFAHDGGRTQLGDSFWMHYIFADGSGSDLVAIWRVYLTYLSLVEIGHDQESAIRWAKRFHVSLRSLKEIHLLVQELRVRCMHLGLIPFSVNPSQMMDDREKAIMLKVIIAGAFYPNYFTRSKDTCADTDRNIYQTISGHDPCRTVYFTNFKPAYMGELYTRRIKELFQEVRIPPENMDVTFQEGSQKVFVTFKQDDWIADSSKFVPVSGRVQSEVYKAVMMRQNRLERPIHIMNPSAFMSYVQQRGIGDVIEGRWIPPTKPLNVELLALPSVFDKTISGLITCIVSCGKFFFQPQSFAECIGNMSEIFNAPQQLRNYVNNAGDITKGMMVLAKRDSYFQRATVIRPENQSNRQPMFYVRFIDYGDCALLSMQQMRLMPRELTEQYGDLPPRVFECRLAMVQPSSMVSGNNRWSTAANDMLRSVAKSGLIDIEVYSLFNNVAAVLIYMRDGIINDKLVELMLCRRSDEDYMSRKDHDFRLRRQESARYLSSAQRQQINEEYMRSCQLPEDHDLRPPPPEKCKTVVILKGPYSPLECTMQCITRVGSSKRVNIDHLSVNALLLDADPQDHHDHLIVAHEIAENRNGHTLTARGTTLMPNVQGFGALMVMLFSPTMQLKCNREGTSYVSVLGGLGCDPETNEPYFPEHDVLINLDVNILEDDVILINQIRYYIDSVFFNFKDENNPAVSANERVSIYTQLRSIINRLLCKDRRYIERNMSNADFEWETHPDLPPPNEPFGKRAIFPMHSLTELQEEDTGRLVQLRENCSMLHKWRNVEGTLPHMTCKLCNQLLDSVPQLRLHLLTILHRDREKQIDYCNQ</sequence>